<proteinExistence type="evidence at transcript level"/>
<evidence type="ECO:0000255" key="1"/>
<evidence type="ECO:0000255" key="2">
    <source>
        <dbReference type="PROSITE-ProRule" id="PRU01191"/>
    </source>
</evidence>
<evidence type="ECO:0000256" key="3">
    <source>
        <dbReference type="SAM" id="MobiDB-lite"/>
    </source>
</evidence>
<evidence type="ECO:0000269" key="4">
    <source>
    </source>
</evidence>
<evidence type="ECO:0000305" key="5"/>
<keyword id="KW-0175">Coiled coil</keyword>
<keyword id="KW-0963">Cytoplasm</keyword>
<keyword id="KW-0217">Developmental protein</keyword>
<keyword id="KW-1185">Reference proteome</keyword>
<keyword id="KW-0804">Transcription</keyword>
<keyword id="KW-0805">Transcription regulation</keyword>
<comment type="function">
    <text evidence="4">Probable transcription factor involved in asmmetric cell division in the cortex/endodermis progenitor cell and in the process of stomata and ligule formation in leaves.</text>
</comment>
<comment type="subcellular location">
    <subcellularLocation>
        <location evidence="4">Cytoplasm</location>
    </subcellularLocation>
    <text>Localized around the dividing nucleus during asymmetric division.</text>
</comment>
<comment type="tissue specificity">
    <text evidence="4">Expressed in the root endodermis, in the cortex/endodermal initial and in the quiescent center. Not expressed in the shoot apical meristem itself, but strongly in the L1 layer.</text>
</comment>
<comment type="developmental stage">
    <text evidence="4">In the basal portion of the P3 leaf primordium, expressed continuously within the stomatal row. At later stages, expressed in guard mother cell (GMC)-forming cells and in subsidiary mother cell (SMC) just before asymmetric division.</text>
</comment>
<comment type="similarity">
    <text evidence="5">Belongs to the GRAS family.</text>
</comment>
<comment type="sequence caution" evidence="5">
    <conflict type="erroneous initiation">
        <sequence resource="EMBL-CDS" id="EAZ19480"/>
    </conflict>
</comment>
<gene>
    <name type="primary">SCR2</name>
    <name type="ordered locus">Os12g0122000</name>
    <name type="ordered locus">LOC_Os12g02870</name>
    <name type="ORF">OsJ_033689</name>
</gene>
<protein>
    <recommendedName>
        <fullName>Protein SCARECROW 2</fullName>
    </recommendedName>
    <alternativeName>
        <fullName>OsSCR2</fullName>
    </alternativeName>
</protein>
<organism>
    <name type="scientific">Oryza sativa subsp. japonica</name>
    <name type="common">Rice</name>
    <dbReference type="NCBI Taxonomy" id="39947"/>
    <lineage>
        <taxon>Eukaryota</taxon>
        <taxon>Viridiplantae</taxon>
        <taxon>Streptophyta</taxon>
        <taxon>Embryophyta</taxon>
        <taxon>Tracheophyta</taxon>
        <taxon>Spermatophyta</taxon>
        <taxon>Magnoliopsida</taxon>
        <taxon>Liliopsida</taxon>
        <taxon>Poales</taxon>
        <taxon>Poaceae</taxon>
        <taxon>BOP clade</taxon>
        <taxon>Oryzoideae</taxon>
        <taxon>Oryzeae</taxon>
        <taxon>Oryzinae</taxon>
        <taxon>Oryza</taxon>
        <taxon>Oryza sativa</taxon>
    </lineage>
</organism>
<reference key="1">
    <citation type="journal article" date="2003" name="Plant J.">
        <title>The SCARECROW gene's role in asymmetric cell divisions in rice plants.</title>
        <authorList>
            <person name="Kamiya N."/>
            <person name="Itoh J."/>
            <person name="Morikami A."/>
            <person name="Nagato Y."/>
            <person name="Matsuoka M."/>
        </authorList>
    </citation>
    <scope>NUCLEOTIDE SEQUENCE [MRNA]</scope>
    <scope>FUNCTION</scope>
    <scope>SUBCELLULAR LOCATION</scope>
    <scope>TISSUE SPECIFICITY</scope>
    <scope>DEVELOPMENTAL STAGE</scope>
    <source>
        <strain>cv. Taichung 65</strain>
    </source>
</reference>
<reference key="2">
    <citation type="journal article" date="2005" name="BMC Biol.">
        <title>The sequence of rice chromosomes 11 and 12, rich in disease resistance genes and recent gene duplications.</title>
        <authorList>
            <consortium name="The rice chromosomes 11 and 12 sequencing consortia"/>
        </authorList>
    </citation>
    <scope>NUCLEOTIDE SEQUENCE [LARGE SCALE GENOMIC DNA]</scope>
    <source>
        <strain>cv. Nipponbare</strain>
    </source>
</reference>
<reference key="3">
    <citation type="journal article" date="2005" name="Nature">
        <title>The map-based sequence of the rice genome.</title>
        <authorList>
            <consortium name="International rice genome sequencing project (IRGSP)"/>
        </authorList>
    </citation>
    <scope>NUCLEOTIDE SEQUENCE [LARGE SCALE GENOMIC DNA]</scope>
    <source>
        <strain>cv. Nipponbare</strain>
    </source>
</reference>
<reference key="4">
    <citation type="journal article" date="2008" name="Nucleic Acids Res.">
        <title>The rice annotation project database (RAP-DB): 2008 update.</title>
        <authorList>
            <consortium name="The rice annotation project (RAP)"/>
        </authorList>
    </citation>
    <scope>GENOME REANNOTATION</scope>
    <source>
        <strain>cv. Nipponbare</strain>
    </source>
</reference>
<reference key="5">
    <citation type="journal article" date="2013" name="Rice">
        <title>Improvement of the Oryza sativa Nipponbare reference genome using next generation sequence and optical map data.</title>
        <authorList>
            <person name="Kawahara Y."/>
            <person name="de la Bastide M."/>
            <person name="Hamilton J.P."/>
            <person name="Kanamori H."/>
            <person name="McCombie W.R."/>
            <person name="Ouyang S."/>
            <person name="Schwartz D.C."/>
            <person name="Tanaka T."/>
            <person name="Wu J."/>
            <person name="Zhou S."/>
            <person name="Childs K.L."/>
            <person name="Davidson R.M."/>
            <person name="Lin H."/>
            <person name="Quesada-Ocampo L."/>
            <person name="Vaillancourt B."/>
            <person name="Sakai H."/>
            <person name="Lee S.S."/>
            <person name="Kim J."/>
            <person name="Numa H."/>
            <person name="Itoh T."/>
            <person name="Buell C.R."/>
            <person name="Matsumoto T."/>
        </authorList>
    </citation>
    <scope>GENOME REANNOTATION</scope>
    <source>
        <strain>cv. Nipponbare</strain>
    </source>
</reference>
<reference key="6">
    <citation type="journal article" date="2005" name="PLoS Biol.">
        <title>The genomes of Oryza sativa: a history of duplications.</title>
        <authorList>
            <person name="Yu J."/>
            <person name="Wang J."/>
            <person name="Lin W."/>
            <person name="Li S."/>
            <person name="Li H."/>
            <person name="Zhou J."/>
            <person name="Ni P."/>
            <person name="Dong W."/>
            <person name="Hu S."/>
            <person name="Zeng C."/>
            <person name="Zhang J."/>
            <person name="Zhang Y."/>
            <person name="Li R."/>
            <person name="Xu Z."/>
            <person name="Li S."/>
            <person name="Li X."/>
            <person name="Zheng H."/>
            <person name="Cong L."/>
            <person name="Lin L."/>
            <person name="Yin J."/>
            <person name="Geng J."/>
            <person name="Li G."/>
            <person name="Shi J."/>
            <person name="Liu J."/>
            <person name="Lv H."/>
            <person name="Li J."/>
            <person name="Wang J."/>
            <person name="Deng Y."/>
            <person name="Ran L."/>
            <person name="Shi X."/>
            <person name="Wang X."/>
            <person name="Wu Q."/>
            <person name="Li C."/>
            <person name="Ren X."/>
            <person name="Wang J."/>
            <person name="Wang X."/>
            <person name="Li D."/>
            <person name="Liu D."/>
            <person name="Zhang X."/>
            <person name="Ji Z."/>
            <person name="Zhao W."/>
            <person name="Sun Y."/>
            <person name="Zhang Z."/>
            <person name="Bao J."/>
            <person name="Han Y."/>
            <person name="Dong L."/>
            <person name="Ji J."/>
            <person name="Chen P."/>
            <person name="Wu S."/>
            <person name="Liu J."/>
            <person name="Xiao Y."/>
            <person name="Bu D."/>
            <person name="Tan J."/>
            <person name="Yang L."/>
            <person name="Ye C."/>
            <person name="Zhang J."/>
            <person name="Xu J."/>
            <person name="Zhou Y."/>
            <person name="Yu Y."/>
            <person name="Zhang B."/>
            <person name="Zhuang S."/>
            <person name="Wei H."/>
            <person name="Liu B."/>
            <person name="Lei M."/>
            <person name="Yu H."/>
            <person name="Li Y."/>
            <person name="Xu H."/>
            <person name="Wei S."/>
            <person name="He X."/>
            <person name="Fang L."/>
            <person name="Zhang Z."/>
            <person name="Zhang Y."/>
            <person name="Huang X."/>
            <person name="Su Z."/>
            <person name="Tong W."/>
            <person name="Li J."/>
            <person name="Tong Z."/>
            <person name="Li S."/>
            <person name="Ye J."/>
            <person name="Wang L."/>
            <person name="Fang L."/>
            <person name="Lei T."/>
            <person name="Chen C.-S."/>
            <person name="Chen H.-C."/>
            <person name="Xu Z."/>
            <person name="Li H."/>
            <person name="Huang H."/>
            <person name="Zhang F."/>
            <person name="Xu H."/>
            <person name="Li N."/>
            <person name="Zhao C."/>
            <person name="Li S."/>
            <person name="Dong L."/>
            <person name="Huang Y."/>
            <person name="Li L."/>
            <person name="Xi Y."/>
            <person name="Qi Q."/>
            <person name="Li W."/>
            <person name="Zhang B."/>
            <person name="Hu W."/>
            <person name="Zhang Y."/>
            <person name="Tian X."/>
            <person name="Jiao Y."/>
            <person name="Liang X."/>
            <person name="Jin J."/>
            <person name="Gao L."/>
            <person name="Zheng W."/>
            <person name="Hao B."/>
            <person name="Liu S.-M."/>
            <person name="Wang W."/>
            <person name="Yuan L."/>
            <person name="Cao M."/>
            <person name="McDermott J."/>
            <person name="Samudrala R."/>
            <person name="Wang J."/>
            <person name="Wong G.K.-S."/>
            <person name="Yang H."/>
        </authorList>
    </citation>
    <scope>NUCLEOTIDE SEQUENCE [LARGE SCALE GENOMIC DNA]</scope>
    <source>
        <strain>cv. Nipponbare</strain>
    </source>
</reference>
<reference key="7">
    <citation type="submission" date="2006-10" db="EMBL/GenBank/DDBJ databases">
        <title>Oryza sativa full length cDNA.</title>
        <authorList>
            <consortium name="The rice full-length cDNA consortium"/>
        </authorList>
    </citation>
    <scope>NUCLEOTIDE SEQUENCE [LARGE SCALE MRNA]</scope>
    <source>
        <strain>cv. Nipponbare</strain>
    </source>
</reference>
<accession>Q2QYF3</accession>
<accession>A3CEG7</accession>
<accession>B7FA13</accession>
<accession>Q6L5Z0</accession>
<feature type="chain" id="PRO_0000329419" description="Protein SCARECROW 2">
    <location>
        <begin position="1"/>
        <end position="660"/>
    </location>
</feature>
<feature type="domain" description="GRAS" evidence="2">
    <location>
        <begin position="283"/>
        <end position="653"/>
    </location>
</feature>
<feature type="region of interest" description="Disordered" evidence="3">
    <location>
        <begin position="1"/>
        <end position="33"/>
    </location>
</feature>
<feature type="region of interest" description="Disordered" evidence="3">
    <location>
        <begin position="190"/>
        <end position="286"/>
    </location>
</feature>
<feature type="region of interest" description="Leucine repeat I (LRI)" evidence="2">
    <location>
        <begin position="290"/>
        <end position="354"/>
    </location>
</feature>
<feature type="region of interest" description="VHIID" evidence="2">
    <location>
        <begin position="373"/>
        <end position="438"/>
    </location>
</feature>
<feature type="region of interest" description="Leucine repeat II (LRII)" evidence="2">
    <location>
        <begin position="448"/>
        <end position="480"/>
    </location>
</feature>
<feature type="region of interest" description="PFYRE" evidence="2">
    <location>
        <begin position="489"/>
        <end position="576"/>
    </location>
</feature>
<feature type="region of interest" description="SAW" evidence="2">
    <location>
        <begin position="579"/>
        <end position="653"/>
    </location>
</feature>
<feature type="coiled-coil region" evidence="1">
    <location>
        <begin position="262"/>
        <end position="289"/>
    </location>
</feature>
<feature type="short sequence motif" description="LxCxE motif" evidence="2">
    <location>
        <begin position="297"/>
        <end position="301"/>
    </location>
</feature>
<feature type="short sequence motif" description="VHIID" evidence="2">
    <location>
        <begin position="404"/>
        <end position="408"/>
    </location>
</feature>
<feature type="compositionally biased region" description="Pro residues" evidence="3">
    <location>
        <begin position="192"/>
        <end position="229"/>
    </location>
</feature>
<feature type="compositionally biased region" description="Low complexity" evidence="3">
    <location>
        <begin position="259"/>
        <end position="272"/>
    </location>
</feature>
<feature type="compositionally biased region" description="Basic and acidic residues" evidence="3">
    <location>
        <begin position="273"/>
        <end position="286"/>
    </location>
</feature>
<feature type="sequence conflict" description="In Ref. 1; BAD22576." evidence="5" ref="1">
    <original>S</original>
    <variation>N</variation>
    <location>
        <position position="357"/>
    </location>
</feature>
<feature type="sequence conflict" description="In Ref. 1; BAD22576." evidence="5" ref="1">
    <original>G</original>
    <variation>A</variation>
    <location>
        <position position="362"/>
    </location>
</feature>
<feature type="sequence conflict" description="In Ref. 1; BAD22576." evidence="5" ref="1">
    <original>V</original>
    <variation>L</variation>
    <location>
        <position position="365"/>
    </location>
</feature>
<feature type="sequence conflict" description="In Ref. 1; BAD22576." evidence="5" ref="1">
    <original>A</original>
    <variation>V</variation>
    <location>
        <position position="617"/>
    </location>
</feature>
<dbReference type="EMBL" id="AB180961">
    <property type="protein sequence ID" value="BAD22576.1"/>
    <property type="molecule type" value="mRNA"/>
</dbReference>
<dbReference type="EMBL" id="DP000011">
    <property type="protein sequence ID" value="ABA95687.1"/>
    <property type="molecule type" value="Genomic_DNA"/>
</dbReference>
<dbReference type="EMBL" id="AP008218">
    <property type="protein sequence ID" value="BAF29046.1"/>
    <property type="molecule type" value="Genomic_DNA"/>
</dbReference>
<dbReference type="EMBL" id="AP014968">
    <property type="protein sequence ID" value="BAT15657.1"/>
    <property type="molecule type" value="Genomic_DNA"/>
</dbReference>
<dbReference type="EMBL" id="CM000149">
    <property type="protein sequence ID" value="EAZ19480.1"/>
    <property type="status" value="ALT_INIT"/>
    <property type="molecule type" value="Genomic_DNA"/>
</dbReference>
<dbReference type="EMBL" id="AK243131">
    <property type="protein sequence ID" value="BAH01461.1"/>
    <property type="molecule type" value="mRNA"/>
</dbReference>
<dbReference type="RefSeq" id="XP_015620600.1">
    <property type="nucleotide sequence ID" value="XM_015765114.1"/>
</dbReference>
<dbReference type="SMR" id="Q2QYF3"/>
<dbReference type="BioGRID" id="820399">
    <property type="interactions" value="2"/>
</dbReference>
<dbReference type="FunCoup" id="Q2QYF3">
    <property type="interactions" value="1355"/>
</dbReference>
<dbReference type="IntAct" id="Q2QYF3">
    <property type="interactions" value="2"/>
</dbReference>
<dbReference type="STRING" id="39947.Q2QYF3"/>
<dbReference type="PaxDb" id="39947-Q2QYF3"/>
<dbReference type="EnsemblPlants" id="Os12t0122000-01">
    <property type="protein sequence ID" value="Os12t0122000-01"/>
    <property type="gene ID" value="Os12g0122000"/>
</dbReference>
<dbReference type="Gramene" id="Os12t0122000-01">
    <property type="protein sequence ID" value="Os12t0122000-01"/>
    <property type="gene ID" value="Os12g0122000"/>
</dbReference>
<dbReference type="KEGG" id="dosa:Os12g0122000"/>
<dbReference type="eggNOG" id="ENOG502QTMY">
    <property type="taxonomic scope" value="Eukaryota"/>
</dbReference>
<dbReference type="HOGENOM" id="CLU_011924_7_2_1"/>
<dbReference type="InParanoid" id="Q2QYF3"/>
<dbReference type="OMA" id="VSATAWI"/>
<dbReference type="OrthoDB" id="757063at2759"/>
<dbReference type="Proteomes" id="UP000000763">
    <property type="component" value="Chromosome 12"/>
</dbReference>
<dbReference type="Proteomes" id="UP000007752">
    <property type="component" value="Chromosome 12"/>
</dbReference>
<dbReference type="Proteomes" id="UP000059680">
    <property type="component" value="Chromosome 12"/>
</dbReference>
<dbReference type="GO" id="GO:0005737">
    <property type="term" value="C:cytoplasm"/>
    <property type="evidence" value="ECO:0007669"/>
    <property type="project" value="UniProtKB-SubCell"/>
</dbReference>
<dbReference type="GO" id="GO:0005634">
    <property type="term" value="C:nucleus"/>
    <property type="evidence" value="ECO:0000318"/>
    <property type="project" value="GO_Central"/>
</dbReference>
<dbReference type="GO" id="GO:0003700">
    <property type="term" value="F:DNA-binding transcription factor activity"/>
    <property type="evidence" value="ECO:0000318"/>
    <property type="project" value="GO_Central"/>
</dbReference>
<dbReference type="GO" id="GO:0043565">
    <property type="term" value="F:sequence-specific DNA binding"/>
    <property type="evidence" value="ECO:0000318"/>
    <property type="project" value="GO_Central"/>
</dbReference>
<dbReference type="GO" id="GO:0008356">
    <property type="term" value="P:asymmetric cell division"/>
    <property type="evidence" value="ECO:0000318"/>
    <property type="project" value="GO_Central"/>
</dbReference>
<dbReference type="GO" id="GO:0090610">
    <property type="term" value="P:bundle sheath cell fate specification"/>
    <property type="evidence" value="ECO:0000318"/>
    <property type="project" value="GO_Central"/>
</dbReference>
<dbReference type="GO" id="GO:0009630">
    <property type="term" value="P:gravitropism"/>
    <property type="evidence" value="ECO:0000318"/>
    <property type="project" value="GO_Central"/>
</dbReference>
<dbReference type="GO" id="GO:0048366">
    <property type="term" value="P:leaf development"/>
    <property type="evidence" value="ECO:0000318"/>
    <property type="project" value="GO_Central"/>
</dbReference>
<dbReference type="GO" id="GO:0051457">
    <property type="term" value="P:maintenance of protein location in nucleus"/>
    <property type="evidence" value="ECO:0000318"/>
    <property type="project" value="GO_Central"/>
</dbReference>
<dbReference type="GO" id="GO:0009956">
    <property type="term" value="P:radial pattern formation"/>
    <property type="evidence" value="ECO:0000318"/>
    <property type="project" value="GO_Central"/>
</dbReference>
<dbReference type="GO" id="GO:0006355">
    <property type="term" value="P:regulation of DNA-templated transcription"/>
    <property type="evidence" value="ECO:0000318"/>
    <property type="project" value="GO_Central"/>
</dbReference>
<dbReference type="InterPro" id="IPR005202">
    <property type="entry name" value="TF_GRAS"/>
</dbReference>
<dbReference type="PANTHER" id="PTHR31636">
    <property type="entry name" value="OSJNBA0084A10.13 PROTEIN-RELATED"/>
    <property type="match status" value="1"/>
</dbReference>
<dbReference type="Pfam" id="PF03514">
    <property type="entry name" value="GRAS"/>
    <property type="match status" value="1"/>
</dbReference>
<dbReference type="PROSITE" id="PS50985">
    <property type="entry name" value="GRAS"/>
    <property type="match status" value="1"/>
</dbReference>
<sequence length="660" mass="70395">MGSSSLLLFPSSSSSATHSSYSPSSSSHAITSLLPPLPSDHHLLLYLDHQEQHHLAAAMVRKRPASDMDLPPPRRHVTGDLSDVTAAAAGAPTLSASAQLPALPTQLPAFHHTDMDLAAPAPPAPQQVAAGEGGPPSTAWVDGIIRDIIASSGAAVSVAQLIHNVREIIRPCNPDLASILELRLRSLLNSDPAPPPPPPSHPALLPPDATAPPPPPTSVAALPPPPPAQPDKRRREPQCQEQEPNQPQSPKPPTAEETAAAAAAAAAAAAAAAKERKEEQRRKQRDEEGLHLLTLLLQCAESVNADNLDEAHRALLEIAELATPFGTSTQRVAAYFAEAMSARLVSSCLGLYAPLPSPSPAGARVHGRVAAAFQVFNGISPFVKFSHFTANQAIQEAFEREERVHIIDLDIMQGLQWPGLFHILASRPGGPPRVRLTGLGASMEALEATGKRLSDFADTLGLPFEFCPVADKAGNLDPEKLGVTRREAVAVHWLRHSLYDVTGSDSNTLWLIQRLAPKVVTMVEQDLSHSGSFLARFVEAIHYYSALFDSLDASYSEDSPERHVVEQQLLSREIRNVLAVGGPARTGDVKFGSWREKLAQSGFRVSSLAGSAAAQAALLLGMFPSDGYTLIEENGALKLGWKDLCLLTASAWRPIQASGR</sequence>
<name>SCR2_ORYSJ</name>